<sequence>MMPNWSQLPEELLNLISKNLDNCFDVVHARSICRSWRSAFPFPSSLSTLSYSLPTFAKFPLVSKDLCTLKKIQIFLFRARNPAADIPEYFLGGIDQDQSNDHMELPSPLQCSVKVKFPQSDPFLVNMLDYQIIPLGFQYIMIGWDPESLANGYVGVAFLPVKKNGGDEFVVLLRYRNHLLVLRSSEMRWMKVKKTSIASCKGLVSFRGRFYVTFLNGDIYVFDPYSLEQTLLMPSEPLRSSKYLIPNGSDELFLVEKFNPFPEADVLDLSRFACRVSRLDEEAGQWVEVIDLGDRVLFIGHFGNVCCSAKELPDGCGVSGNSILFTNEPGYVTFAYKYGVHTGRAEDELNIWRFSREIRVMIVNTFPVVALRLERQAENLALDT</sequence>
<feature type="chain" id="PRO_0000283187" description="F-box/kelch-repeat protein At1g64840">
    <location>
        <begin position="1"/>
        <end position="384"/>
    </location>
</feature>
<feature type="domain" description="F-box">
    <location>
        <begin position="3"/>
        <end position="51"/>
    </location>
</feature>
<feature type="repeat" description="Kelch 1">
    <location>
        <begin position="87"/>
        <end position="137"/>
    </location>
</feature>
<feature type="repeat" description="Kelch 2">
    <location>
        <begin position="259"/>
        <end position="309"/>
    </location>
</feature>
<accession>Q9XIR1</accession>
<accession>A2RVN1</accession>
<protein>
    <recommendedName>
        <fullName>F-box/kelch-repeat protein At1g64840</fullName>
    </recommendedName>
</protein>
<keyword id="KW-0880">Kelch repeat</keyword>
<keyword id="KW-1185">Reference proteome</keyword>
<keyword id="KW-0677">Repeat</keyword>
<proteinExistence type="evidence at transcript level"/>
<dbReference type="EMBL" id="AC006193">
    <property type="protein sequence ID" value="AAD38258.1"/>
    <property type="status" value="ALT_INIT"/>
    <property type="molecule type" value="Genomic_DNA"/>
</dbReference>
<dbReference type="EMBL" id="CP002684">
    <property type="protein sequence ID" value="AEE34296.1"/>
    <property type="molecule type" value="Genomic_DNA"/>
</dbReference>
<dbReference type="EMBL" id="BT030022">
    <property type="protein sequence ID" value="ABN04760.1"/>
    <property type="molecule type" value="mRNA"/>
</dbReference>
<dbReference type="PIR" id="F96671">
    <property type="entry name" value="F96671"/>
</dbReference>
<dbReference type="RefSeq" id="NP_176664.2">
    <property type="nucleotide sequence ID" value="NM_105158.3"/>
</dbReference>
<dbReference type="BioGRID" id="28013">
    <property type="interactions" value="3"/>
</dbReference>
<dbReference type="FunCoup" id="Q9XIR1">
    <property type="interactions" value="80"/>
</dbReference>
<dbReference type="STRING" id="3702.Q9XIR1"/>
<dbReference type="PaxDb" id="3702-AT1G64840.1"/>
<dbReference type="ProteomicsDB" id="222483"/>
<dbReference type="EnsemblPlants" id="AT1G64840.1">
    <property type="protein sequence ID" value="AT1G64840.1"/>
    <property type="gene ID" value="AT1G64840"/>
</dbReference>
<dbReference type="GeneID" id="842792"/>
<dbReference type="Gramene" id="AT1G64840.1">
    <property type="protein sequence ID" value="AT1G64840.1"/>
    <property type="gene ID" value="AT1G64840"/>
</dbReference>
<dbReference type="KEGG" id="ath:AT1G64840"/>
<dbReference type="Araport" id="AT1G64840"/>
<dbReference type="TAIR" id="AT1G64840">
    <property type="gene designation" value="ATFDA3"/>
</dbReference>
<dbReference type="HOGENOM" id="CLU_019286_10_0_1"/>
<dbReference type="InParanoid" id="Q9XIR1"/>
<dbReference type="OMA" id="LENECMS"/>
<dbReference type="PhylomeDB" id="Q9XIR1"/>
<dbReference type="PRO" id="PR:Q9XIR1"/>
<dbReference type="Proteomes" id="UP000006548">
    <property type="component" value="Chromosome 1"/>
</dbReference>
<dbReference type="ExpressionAtlas" id="Q9XIR1">
    <property type="expression patterns" value="baseline and differential"/>
</dbReference>
<dbReference type="GO" id="GO:0005737">
    <property type="term" value="C:cytoplasm"/>
    <property type="evidence" value="ECO:0000314"/>
    <property type="project" value="TAIR"/>
</dbReference>
<dbReference type="Gene3D" id="1.20.1280.50">
    <property type="match status" value="1"/>
</dbReference>
<dbReference type="InterPro" id="IPR036047">
    <property type="entry name" value="F-box-like_dom_sf"/>
</dbReference>
<dbReference type="InterPro" id="IPR001810">
    <property type="entry name" value="F-box_dom"/>
</dbReference>
<dbReference type="InterPro" id="IPR005174">
    <property type="entry name" value="KIB1-4_b-propeller"/>
</dbReference>
<dbReference type="InterPro" id="IPR051304">
    <property type="entry name" value="SCF_F-box_domain"/>
</dbReference>
<dbReference type="PANTHER" id="PTHR47123">
    <property type="entry name" value="F-BOX PROTEIN SKIP23"/>
    <property type="match status" value="1"/>
</dbReference>
<dbReference type="PANTHER" id="PTHR47123:SF24">
    <property type="entry name" value="LOW PROTEIN: F-BOX_KELCH-REPEAT PROTEIN"/>
    <property type="match status" value="1"/>
</dbReference>
<dbReference type="Pfam" id="PF03478">
    <property type="entry name" value="Beta-prop_KIB1-4"/>
    <property type="match status" value="1"/>
</dbReference>
<dbReference type="Pfam" id="PF00646">
    <property type="entry name" value="F-box"/>
    <property type="match status" value="1"/>
</dbReference>
<dbReference type="SMART" id="SM00256">
    <property type="entry name" value="FBOX"/>
    <property type="match status" value="1"/>
</dbReference>
<dbReference type="SUPFAM" id="SSF81383">
    <property type="entry name" value="F-box domain"/>
    <property type="match status" value="1"/>
</dbReference>
<comment type="sequence caution" evidence="1">
    <conflict type="erroneous initiation">
        <sequence resource="EMBL-CDS" id="AAD38258"/>
    </conflict>
</comment>
<reference key="1">
    <citation type="journal article" date="2000" name="Nature">
        <title>Sequence and analysis of chromosome 1 of the plant Arabidopsis thaliana.</title>
        <authorList>
            <person name="Theologis A."/>
            <person name="Ecker J.R."/>
            <person name="Palm C.J."/>
            <person name="Federspiel N.A."/>
            <person name="Kaul S."/>
            <person name="White O."/>
            <person name="Alonso J."/>
            <person name="Altafi H."/>
            <person name="Araujo R."/>
            <person name="Bowman C.L."/>
            <person name="Brooks S.Y."/>
            <person name="Buehler E."/>
            <person name="Chan A."/>
            <person name="Chao Q."/>
            <person name="Chen H."/>
            <person name="Cheuk R.F."/>
            <person name="Chin C.W."/>
            <person name="Chung M.K."/>
            <person name="Conn L."/>
            <person name="Conway A.B."/>
            <person name="Conway A.R."/>
            <person name="Creasy T.H."/>
            <person name="Dewar K."/>
            <person name="Dunn P."/>
            <person name="Etgu P."/>
            <person name="Feldblyum T.V."/>
            <person name="Feng J.-D."/>
            <person name="Fong B."/>
            <person name="Fujii C.Y."/>
            <person name="Gill J.E."/>
            <person name="Goldsmith A.D."/>
            <person name="Haas B."/>
            <person name="Hansen N.F."/>
            <person name="Hughes B."/>
            <person name="Huizar L."/>
            <person name="Hunter J.L."/>
            <person name="Jenkins J."/>
            <person name="Johnson-Hopson C."/>
            <person name="Khan S."/>
            <person name="Khaykin E."/>
            <person name="Kim C.J."/>
            <person name="Koo H.L."/>
            <person name="Kremenetskaia I."/>
            <person name="Kurtz D.B."/>
            <person name="Kwan A."/>
            <person name="Lam B."/>
            <person name="Langin-Hooper S."/>
            <person name="Lee A."/>
            <person name="Lee J.M."/>
            <person name="Lenz C.A."/>
            <person name="Li J.H."/>
            <person name="Li Y.-P."/>
            <person name="Lin X."/>
            <person name="Liu S.X."/>
            <person name="Liu Z.A."/>
            <person name="Luros J.S."/>
            <person name="Maiti R."/>
            <person name="Marziali A."/>
            <person name="Militscher J."/>
            <person name="Miranda M."/>
            <person name="Nguyen M."/>
            <person name="Nierman W.C."/>
            <person name="Osborne B.I."/>
            <person name="Pai G."/>
            <person name="Peterson J."/>
            <person name="Pham P.K."/>
            <person name="Rizzo M."/>
            <person name="Rooney T."/>
            <person name="Rowley D."/>
            <person name="Sakano H."/>
            <person name="Salzberg S.L."/>
            <person name="Schwartz J.R."/>
            <person name="Shinn P."/>
            <person name="Southwick A.M."/>
            <person name="Sun H."/>
            <person name="Tallon L.J."/>
            <person name="Tambunga G."/>
            <person name="Toriumi M.J."/>
            <person name="Town C.D."/>
            <person name="Utterback T."/>
            <person name="Van Aken S."/>
            <person name="Vaysberg M."/>
            <person name="Vysotskaia V.S."/>
            <person name="Walker M."/>
            <person name="Wu D."/>
            <person name="Yu G."/>
            <person name="Fraser C.M."/>
            <person name="Venter J.C."/>
            <person name="Davis R.W."/>
        </authorList>
    </citation>
    <scope>NUCLEOTIDE SEQUENCE [LARGE SCALE GENOMIC DNA]</scope>
    <source>
        <strain>cv. Columbia</strain>
    </source>
</reference>
<reference key="2">
    <citation type="journal article" date="2017" name="Plant J.">
        <title>Araport11: a complete reannotation of the Arabidopsis thaliana reference genome.</title>
        <authorList>
            <person name="Cheng C.Y."/>
            <person name="Krishnakumar V."/>
            <person name="Chan A.P."/>
            <person name="Thibaud-Nissen F."/>
            <person name="Schobel S."/>
            <person name="Town C.D."/>
        </authorList>
    </citation>
    <scope>GENOME REANNOTATION</scope>
    <source>
        <strain>cv. Columbia</strain>
    </source>
</reference>
<reference key="3">
    <citation type="submission" date="2007-01" db="EMBL/GenBank/DDBJ databases">
        <title>Arabidopsis ORF clones.</title>
        <authorList>
            <person name="Bautista V.R."/>
            <person name="Kim C.J."/>
            <person name="Chen H."/>
            <person name="Wu S.Y."/>
            <person name="De Los Reyes C."/>
            <person name="Ecker J.R."/>
        </authorList>
    </citation>
    <scope>NUCLEOTIDE SEQUENCE [LARGE SCALE MRNA]</scope>
    <source>
        <strain>cv. Columbia</strain>
    </source>
</reference>
<organism>
    <name type="scientific">Arabidopsis thaliana</name>
    <name type="common">Mouse-ear cress</name>
    <dbReference type="NCBI Taxonomy" id="3702"/>
    <lineage>
        <taxon>Eukaryota</taxon>
        <taxon>Viridiplantae</taxon>
        <taxon>Streptophyta</taxon>
        <taxon>Embryophyta</taxon>
        <taxon>Tracheophyta</taxon>
        <taxon>Spermatophyta</taxon>
        <taxon>Magnoliopsida</taxon>
        <taxon>eudicotyledons</taxon>
        <taxon>Gunneridae</taxon>
        <taxon>Pentapetalae</taxon>
        <taxon>rosids</taxon>
        <taxon>malvids</taxon>
        <taxon>Brassicales</taxon>
        <taxon>Brassicaceae</taxon>
        <taxon>Camelineae</taxon>
        <taxon>Arabidopsis</taxon>
    </lineage>
</organism>
<evidence type="ECO:0000305" key="1"/>
<name>FBK27_ARATH</name>
<gene>
    <name type="ordered locus">At1g64840</name>
    <name type="ORF">F13O11.14</name>
</gene>